<organism>
    <name type="scientific">Mycoplasma pneumoniae (strain ATCC 29342 / M129 / Subtype 1)</name>
    <name type="common">Mycoplasmoides pneumoniae</name>
    <dbReference type="NCBI Taxonomy" id="272634"/>
    <lineage>
        <taxon>Bacteria</taxon>
        <taxon>Bacillati</taxon>
        <taxon>Mycoplasmatota</taxon>
        <taxon>Mycoplasmoidales</taxon>
        <taxon>Mycoplasmoidaceae</taxon>
        <taxon>Mycoplasmoides</taxon>
    </lineage>
</organism>
<dbReference type="EC" id="3.1.26.3" evidence="1"/>
<dbReference type="EMBL" id="U00089">
    <property type="protein sequence ID" value="AAB95945.1"/>
    <property type="molecule type" value="Genomic_DNA"/>
</dbReference>
<dbReference type="PIR" id="S73623">
    <property type="entry name" value="S73623"/>
</dbReference>
<dbReference type="RefSeq" id="NP_110234.1">
    <property type="nucleotide sequence ID" value="NC_000912.1"/>
</dbReference>
<dbReference type="RefSeq" id="WP_010874902.1">
    <property type="nucleotide sequence ID" value="NZ_OU342337.1"/>
</dbReference>
<dbReference type="SMR" id="P75233"/>
<dbReference type="STRING" id="272634.MPN_545"/>
<dbReference type="EnsemblBacteria" id="AAB95945">
    <property type="protein sequence ID" value="AAB95945"/>
    <property type="gene ID" value="MPN_545"/>
</dbReference>
<dbReference type="GeneID" id="66608773"/>
<dbReference type="KEGG" id="mpn:MPN_545"/>
<dbReference type="PATRIC" id="fig|272634.6.peg.607"/>
<dbReference type="HOGENOM" id="CLU_1026084_0_0_14"/>
<dbReference type="OrthoDB" id="9805026at2"/>
<dbReference type="BioCyc" id="MPNE272634:G1GJ3-898-MONOMER"/>
<dbReference type="Proteomes" id="UP000000808">
    <property type="component" value="Chromosome"/>
</dbReference>
<dbReference type="GO" id="GO:0005737">
    <property type="term" value="C:cytoplasm"/>
    <property type="evidence" value="ECO:0007669"/>
    <property type="project" value="UniProtKB-SubCell"/>
</dbReference>
<dbReference type="GO" id="GO:0046872">
    <property type="term" value="F:metal ion binding"/>
    <property type="evidence" value="ECO:0007669"/>
    <property type="project" value="UniProtKB-KW"/>
</dbReference>
<dbReference type="GO" id="GO:0004525">
    <property type="term" value="F:ribonuclease III activity"/>
    <property type="evidence" value="ECO:0007669"/>
    <property type="project" value="UniProtKB-UniRule"/>
</dbReference>
<dbReference type="GO" id="GO:0003723">
    <property type="term" value="F:RNA binding"/>
    <property type="evidence" value="ECO:0007669"/>
    <property type="project" value="InterPro"/>
</dbReference>
<dbReference type="GO" id="GO:0006397">
    <property type="term" value="P:mRNA processing"/>
    <property type="evidence" value="ECO:0007669"/>
    <property type="project" value="UniProtKB-UniRule"/>
</dbReference>
<dbReference type="GO" id="GO:0006364">
    <property type="term" value="P:rRNA processing"/>
    <property type="evidence" value="ECO:0007669"/>
    <property type="project" value="UniProtKB-UniRule"/>
</dbReference>
<dbReference type="GO" id="GO:0008033">
    <property type="term" value="P:tRNA processing"/>
    <property type="evidence" value="ECO:0007669"/>
    <property type="project" value="UniProtKB-KW"/>
</dbReference>
<dbReference type="CDD" id="cd00593">
    <property type="entry name" value="RIBOc"/>
    <property type="match status" value="1"/>
</dbReference>
<dbReference type="Gene3D" id="1.10.1520.10">
    <property type="entry name" value="Ribonuclease III domain"/>
    <property type="match status" value="1"/>
</dbReference>
<dbReference type="HAMAP" id="MF_00104">
    <property type="entry name" value="RNase_III"/>
    <property type="match status" value="1"/>
</dbReference>
<dbReference type="InterPro" id="IPR011907">
    <property type="entry name" value="RNase_III"/>
</dbReference>
<dbReference type="InterPro" id="IPR000999">
    <property type="entry name" value="RNase_III_dom"/>
</dbReference>
<dbReference type="InterPro" id="IPR036389">
    <property type="entry name" value="RNase_III_sf"/>
</dbReference>
<dbReference type="NCBIfam" id="TIGR02191">
    <property type="entry name" value="RNaseIII"/>
    <property type="match status" value="1"/>
</dbReference>
<dbReference type="PANTHER" id="PTHR14950">
    <property type="entry name" value="DICER-RELATED"/>
    <property type="match status" value="1"/>
</dbReference>
<dbReference type="PANTHER" id="PTHR14950:SF37">
    <property type="entry name" value="ENDORIBONUCLEASE DICER"/>
    <property type="match status" value="1"/>
</dbReference>
<dbReference type="Pfam" id="PF14622">
    <property type="entry name" value="Ribonucleas_3_3"/>
    <property type="match status" value="1"/>
</dbReference>
<dbReference type="SMART" id="SM00535">
    <property type="entry name" value="RIBOc"/>
    <property type="match status" value="1"/>
</dbReference>
<dbReference type="SUPFAM" id="SSF69065">
    <property type="entry name" value="RNase III domain-like"/>
    <property type="match status" value="1"/>
</dbReference>
<dbReference type="PROSITE" id="PS00517">
    <property type="entry name" value="RNASE_3_1"/>
    <property type="match status" value="1"/>
</dbReference>
<dbReference type="PROSITE" id="PS50142">
    <property type="entry name" value="RNASE_3_2"/>
    <property type="match status" value="1"/>
</dbReference>
<comment type="function">
    <text evidence="1">Digests double-stranded RNA. Involved in the processing of primary rRNA transcript to yield the immediate precursors to the large and small rRNAs (23S and 16S). Processes some mRNAs, and tRNAs when they are encoded in the rRNA operon. Processes pre-crRNA and tracrRNA of type II CRISPR loci if present in the organism.</text>
</comment>
<comment type="catalytic activity">
    <reaction evidence="1">
        <text>Endonucleolytic cleavage to 5'-phosphomonoester.</text>
        <dbReference type="EC" id="3.1.26.3"/>
    </reaction>
</comment>
<comment type="cofactor">
    <cofactor evidence="1">
        <name>Mg(2+)</name>
        <dbReference type="ChEBI" id="CHEBI:18420"/>
    </cofactor>
</comment>
<comment type="subunit">
    <text evidence="1">Homodimer.</text>
</comment>
<comment type="subcellular location">
    <subcellularLocation>
        <location evidence="1">Cytoplasm</location>
    </subcellularLocation>
</comment>
<comment type="similarity">
    <text evidence="1">Belongs to the ribonuclease III family.</text>
</comment>
<gene>
    <name evidence="1" type="primary">rnc</name>
    <name type="ordered locus">MPN_545</name>
    <name type="ORF">MP297</name>
</gene>
<feature type="chain" id="PRO_0000180411" description="Ribonuclease 3">
    <location>
        <begin position="1"/>
        <end position="282"/>
    </location>
</feature>
<feature type="domain" description="RNase III" evidence="1">
    <location>
        <begin position="18"/>
        <end position="141"/>
    </location>
</feature>
<feature type="active site" evidence="1">
    <location>
        <position position="63"/>
    </location>
</feature>
<feature type="active site" evidence="1">
    <location>
        <position position="130"/>
    </location>
</feature>
<feature type="binding site" evidence="1">
    <location>
        <position position="59"/>
    </location>
    <ligand>
        <name>Mg(2+)</name>
        <dbReference type="ChEBI" id="CHEBI:18420"/>
    </ligand>
</feature>
<feature type="binding site" evidence="1">
    <location>
        <position position="127"/>
    </location>
    <ligand>
        <name>Mg(2+)</name>
        <dbReference type="ChEBI" id="CHEBI:18420"/>
    </ligand>
</feature>
<feature type="binding site" evidence="1">
    <location>
        <position position="130"/>
    </location>
    <ligand>
        <name>Mg(2+)</name>
        <dbReference type="ChEBI" id="CHEBI:18420"/>
    </ligand>
</feature>
<proteinExistence type="inferred from homology"/>
<evidence type="ECO:0000255" key="1">
    <source>
        <dbReference type="HAMAP-Rule" id="MF_00104"/>
    </source>
</evidence>
<accession>P75233</accession>
<sequence length="282" mass="32653">MKNKKDKTQKPKVIDEKFVAFFKSLNIEPQNWQFYEDAFVHSSYVNENEDARASYDRLEFLGDALIDFIVAKKLFELYPNYNEGMLTRTKIEIVKGENLNRIGKELNFGNFIKLGKGMPYTETLFGDVLEALVAAIYEDLGIEKANQFVEEHIFKKTYSEILKYNFFSLFQEQKLPEPRVRVSLTSNNLVLSIIELNGDIIWSQAVPNSKHYDDKSVLEHNAMSAFTQFLKSGKGINFFSDIKNKLDSQKPMRALTVRPKKINWKARKPKLKALKNKVKADS</sequence>
<name>RNC_MYCPN</name>
<keyword id="KW-0963">Cytoplasm</keyword>
<keyword id="KW-0255">Endonuclease</keyword>
<keyword id="KW-0378">Hydrolase</keyword>
<keyword id="KW-0460">Magnesium</keyword>
<keyword id="KW-0479">Metal-binding</keyword>
<keyword id="KW-0507">mRNA processing</keyword>
<keyword id="KW-0540">Nuclease</keyword>
<keyword id="KW-1185">Reference proteome</keyword>
<keyword id="KW-0698">rRNA processing</keyword>
<keyword id="KW-0819">tRNA processing</keyword>
<protein>
    <recommendedName>
        <fullName evidence="1">Ribonuclease 3</fullName>
        <ecNumber evidence="1">3.1.26.3</ecNumber>
    </recommendedName>
    <alternativeName>
        <fullName evidence="1">Ribonuclease III</fullName>
        <shortName evidence="1">RNase III</shortName>
    </alternativeName>
</protein>
<reference key="1">
    <citation type="journal article" date="1996" name="Nucleic Acids Res.">
        <title>Complete sequence analysis of the genome of the bacterium Mycoplasma pneumoniae.</title>
        <authorList>
            <person name="Himmelreich R."/>
            <person name="Hilbert H."/>
            <person name="Plagens H."/>
            <person name="Pirkl E."/>
            <person name="Li B.-C."/>
            <person name="Herrmann R."/>
        </authorList>
    </citation>
    <scope>NUCLEOTIDE SEQUENCE [LARGE SCALE GENOMIC DNA]</scope>
    <source>
        <strain>ATCC 29342 / M129 / Subtype 1</strain>
    </source>
</reference>